<comment type="interaction">
    <interactant intactId="EBI-10274039">
        <id>Q8TCA0</id>
    </interactant>
    <interactant intactId="EBI-12117154">
        <id>O60784-2</id>
        <label>TOM1</label>
    </interactant>
    <organismsDiffer>false</organismsDiffer>
    <experiments>3</experiments>
</comment>
<comment type="interaction">
    <interactant intactId="EBI-10274039">
        <id>Q8TCA0</id>
    </interactant>
    <interactant intactId="EBI-740037">
        <id>O96006</id>
        <label>ZBED1</label>
    </interactant>
    <organismsDiffer>false</organismsDiffer>
    <experiments>6</experiments>
</comment>
<comment type="alternative products">
    <event type="alternative splicing"/>
    <isoform>
        <id>Q8TCA0-1</id>
        <name>1</name>
        <sequence type="displayed"/>
    </isoform>
    <isoform>
        <id>Q8TCA0-2</id>
        <name>2</name>
        <sequence type="described" ref="VSP_015933"/>
    </isoform>
    <isoform>
        <id>Q8TCA0-3</id>
        <name>3</name>
        <sequence type="described" ref="VSP_015934"/>
    </isoform>
</comment>
<comment type="sequence caution" evidence="2">
    <conflict type="erroneous termination">
        <sequence resource="EMBL-CDS" id="BAA91849"/>
    </conflict>
    <text>Extended C-terminus.</text>
</comment>
<protein>
    <recommendedName>
        <fullName>Leucine-rich repeat-containing protein 20</fullName>
    </recommendedName>
</protein>
<name>LRC20_HUMAN</name>
<evidence type="ECO:0000303" key="1">
    <source>
    </source>
</evidence>
<evidence type="ECO:0000305" key="2"/>
<evidence type="ECO:0007744" key="3">
    <source>
    </source>
</evidence>
<proteinExistence type="evidence at protein level"/>
<accession>Q8TCA0</accession>
<accession>Q5T6D4</accession>
<accession>Q5T6D6</accession>
<accession>Q9NVA6</accession>
<accession>Q9NVG3</accession>
<feature type="chain" id="PRO_0000084475" description="Leucine-rich repeat-containing protein 20">
    <location>
        <begin position="1"/>
        <end position="184"/>
    </location>
</feature>
<feature type="repeat" description="LRR 1">
    <location>
        <begin position="51"/>
        <end position="72"/>
    </location>
</feature>
<feature type="repeat" description="LRR 2">
    <location>
        <begin position="75"/>
        <end position="96"/>
    </location>
</feature>
<feature type="repeat" description="LRR 3">
    <location>
        <begin position="98"/>
        <end position="120"/>
    </location>
</feature>
<feature type="repeat" description="LRR 4">
    <location>
        <begin position="121"/>
        <end position="141"/>
    </location>
</feature>
<feature type="repeat" description="LRR 5">
    <location>
        <begin position="145"/>
        <end position="167"/>
    </location>
</feature>
<feature type="modified residue" description="Phosphoserine" evidence="3">
    <location>
        <position position="175"/>
    </location>
</feature>
<feature type="splice variant" id="VSP_015933" description="In isoform 2." evidence="1">
    <location>
        <begin position="28"/>
        <end position="77"/>
    </location>
</feature>
<feature type="splice variant" id="VSP_015934" description="In isoform 3." evidence="1">
    <location>
        <begin position="78"/>
        <end position="133"/>
    </location>
</feature>
<gene>
    <name type="primary">LRRC20</name>
    <name type="ORF">UNQ2429/PRO4989</name>
</gene>
<sequence>MLKKMGEAVARVARKVNETVESGSDTLDLAECKLVSFPIGIYKVLRNVSGQIHLITLANNELKSLTSKFMTTFSQLRELHLEGNFLHRLPSEVSALQHLKAIDLSRNQFQDFPEQLTALPALETINLEENEIVDVPVEKLAAMPALRSINLRFNPLNAEVRVIAPPLIKFDMLMSPEGARAPLP</sequence>
<reference key="1">
    <citation type="journal article" date="2003" name="Genome Res.">
        <title>The secreted protein discovery initiative (SPDI), a large-scale effort to identify novel human secreted and transmembrane proteins: a bioinformatics assessment.</title>
        <authorList>
            <person name="Clark H.F."/>
            <person name="Gurney A.L."/>
            <person name="Abaya E."/>
            <person name="Baker K."/>
            <person name="Baldwin D.T."/>
            <person name="Brush J."/>
            <person name="Chen J."/>
            <person name="Chow B."/>
            <person name="Chui C."/>
            <person name="Crowley C."/>
            <person name="Currell B."/>
            <person name="Deuel B."/>
            <person name="Dowd P."/>
            <person name="Eaton D."/>
            <person name="Foster J.S."/>
            <person name="Grimaldi C."/>
            <person name="Gu Q."/>
            <person name="Hass P.E."/>
            <person name="Heldens S."/>
            <person name="Huang A."/>
            <person name="Kim H.S."/>
            <person name="Klimowski L."/>
            <person name="Jin Y."/>
            <person name="Johnson S."/>
            <person name="Lee J."/>
            <person name="Lewis L."/>
            <person name="Liao D."/>
            <person name="Mark M.R."/>
            <person name="Robbie E."/>
            <person name="Sanchez C."/>
            <person name="Schoenfeld J."/>
            <person name="Seshagiri S."/>
            <person name="Simmons L."/>
            <person name="Singh J."/>
            <person name="Smith V."/>
            <person name="Stinson J."/>
            <person name="Vagts A."/>
            <person name="Vandlen R.L."/>
            <person name="Watanabe C."/>
            <person name="Wieand D."/>
            <person name="Woods K."/>
            <person name="Xie M.-H."/>
            <person name="Yansura D.G."/>
            <person name="Yi S."/>
            <person name="Yu G."/>
            <person name="Yuan J."/>
            <person name="Zhang M."/>
            <person name="Zhang Z."/>
            <person name="Goddard A.D."/>
            <person name="Wood W.I."/>
            <person name="Godowski P.J."/>
            <person name="Gray A.M."/>
        </authorList>
    </citation>
    <scope>NUCLEOTIDE SEQUENCE [LARGE SCALE MRNA] (ISOFORM 1)</scope>
</reference>
<reference key="2">
    <citation type="journal article" date="2004" name="Nat. Genet.">
        <title>Complete sequencing and characterization of 21,243 full-length human cDNAs.</title>
        <authorList>
            <person name="Ota T."/>
            <person name="Suzuki Y."/>
            <person name="Nishikawa T."/>
            <person name="Otsuki T."/>
            <person name="Sugiyama T."/>
            <person name="Irie R."/>
            <person name="Wakamatsu A."/>
            <person name="Hayashi K."/>
            <person name="Sato H."/>
            <person name="Nagai K."/>
            <person name="Kimura K."/>
            <person name="Makita H."/>
            <person name="Sekine M."/>
            <person name="Obayashi M."/>
            <person name="Nishi T."/>
            <person name="Shibahara T."/>
            <person name="Tanaka T."/>
            <person name="Ishii S."/>
            <person name="Yamamoto J."/>
            <person name="Saito K."/>
            <person name="Kawai Y."/>
            <person name="Isono Y."/>
            <person name="Nakamura Y."/>
            <person name="Nagahari K."/>
            <person name="Murakami K."/>
            <person name="Yasuda T."/>
            <person name="Iwayanagi T."/>
            <person name="Wagatsuma M."/>
            <person name="Shiratori A."/>
            <person name="Sudo H."/>
            <person name="Hosoiri T."/>
            <person name="Kaku Y."/>
            <person name="Kodaira H."/>
            <person name="Kondo H."/>
            <person name="Sugawara M."/>
            <person name="Takahashi M."/>
            <person name="Kanda K."/>
            <person name="Yokoi T."/>
            <person name="Furuya T."/>
            <person name="Kikkawa E."/>
            <person name="Omura Y."/>
            <person name="Abe K."/>
            <person name="Kamihara K."/>
            <person name="Katsuta N."/>
            <person name="Sato K."/>
            <person name="Tanikawa M."/>
            <person name="Yamazaki M."/>
            <person name="Ninomiya K."/>
            <person name="Ishibashi T."/>
            <person name="Yamashita H."/>
            <person name="Murakawa K."/>
            <person name="Fujimori K."/>
            <person name="Tanai H."/>
            <person name="Kimata M."/>
            <person name="Watanabe M."/>
            <person name="Hiraoka S."/>
            <person name="Chiba Y."/>
            <person name="Ishida S."/>
            <person name="Ono Y."/>
            <person name="Takiguchi S."/>
            <person name="Watanabe S."/>
            <person name="Yosida M."/>
            <person name="Hotuta T."/>
            <person name="Kusano J."/>
            <person name="Kanehori K."/>
            <person name="Takahashi-Fujii A."/>
            <person name="Hara H."/>
            <person name="Tanase T.-O."/>
            <person name="Nomura Y."/>
            <person name="Togiya S."/>
            <person name="Komai F."/>
            <person name="Hara R."/>
            <person name="Takeuchi K."/>
            <person name="Arita M."/>
            <person name="Imose N."/>
            <person name="Musashino K."/>
            <person name="Yuuki H."/>
            <person name="Oshima A."/>
            <person name="Sasaki N."/>
            <person name="Aotsuka S."/>
            <person name="Yoshikawa Y."/>
            <person name="Matsunawa H."/>
            <person name="Ichihara T."/>
            <person name="Shiohata N."/>
            <person name="Sano S."/>
            <person name="Moriya S."/>
            <person name="Momiyama H."/>
            <person name="Satoh N."/>
            <person name="Takami S."/>
            <person name="Terashima Y."/>
            <person name="Suzuki O."/>
            <person name="Nakagawa S."/>
            <person name="Senoh A."/>
            <person name="Mizoguchi H."/>
            <person name="Goto Y."/>
            <person name="Shimizu F."/>
            <person name="Wakebe H."/>
            <person name="Hishigaki H."/>
            <person name="Watanabe T."/>
            <person name="Sugiyama A."/>
            <person name="Takemoto M."/>
            <person name="Kawakami B."/>
            <person name="Yamazaki M."/>
            <person name="Watanabe K."/>
            <person name="Kumagai A."/>
            <person name="Itakura S."/>
            <person name="Fukuzumi Y."/>
            <person name="Fujimori Y."/>
            <person name="Komiyama M."/>
            <person name="Tashiro H."/>
            <person name="Tanigami A."/>
            <person name="Fujiwara T."/>
            <person name="Ono T."/>
            <person name="Yamada K."/>
            <person name="Fujii Y."/>
            <person name="Ozaki K."/>
            <person name="Hirao M."/>
            <person name="Ohmori Y."/>
            <person name="Kawabata A."/>
            <person name="Hikiji T."/>
            <person name="Kobatake N."/>
            <person name="Inagaki H."/>
            <person name="Ikema Y."/>
            <person name="Okamoto S."/>
            <person name="Okitani R."/>
            <person name="Kawakami T."/>
            <person name="Noguchi S."/>
            <person name="Itoh T."/>
            <person name="Shigeta K."/>
            <person name="Senba T."/>
            <person name="Matsumura K."/>
            <person name="Nakajima Y."/>
            <person name="Mizuno T."/>
            <person name="Morinaga M."/>
            <person name="Sasaki M."/>
            <person name="Togashi T."/>
            <person name="Oyama M."/>
            <person name="Hata H."/>
            <person name="Watanabe M."/>
            <person name="Komatsu T."/>
            <person name="Mizushima-Sugano J."/>
            <person name="Satoh T."/>
            <person name="Shirai Y."/>
            <person name="Takahashi Y."/>
            <person name="Nakagawa K."/>
            <person name="Okumura K."/>
            <person name="Nagase T."/>
            <person name="Nomura N."/>
            <person name="Kikuchi H."/>
            <person name="Masuho Y."/>
            <person name="Yamashita R."/>
            <person name="Nakai K."/>
            <person name="Yada T."/>
            <person name="Nakamura Y."/>
            <person name="Ohara O."/>
            <person name="Isogai T."/>
            <person name="Sugano S."/>
        </authorList>
    </citation>
    <scope>NUCLEOTIDE SEQUENCE [LARGE SCALE MRNA] (ISOFORMS 1; 2 AND 3)</scope>
    <source>
        <tissue>Brain</tissue>
    </source>
</reference>
<reference key="3">
    <citation type="journal article" date="2004" name="Nature">
        <title>The DNA sequence and comparative analysis of human chromosome 10.</title>
        <authorList>
            <person name="Deloukas P."/>
            <person name="Earthrowl M.E."/>
            <person name="Grafham D.V."/>
            <person name="Rubenfield M."/>
            <person name="French L."/>
            <person name="Steward C.A."/>
            <person name="Sims S.K."/>
            <person name="Jones M.C."/>
            <person name="Searle S."/>
            <person name="Scott C."/>
            <person name="Howe K."/>
            <person name="Hunt S.E."/>
            <person name="Andrews T.D."/>
            <person name="Gilbert J.G.R."/>
            <person name="Swarbreck D."/>
            <person name="Ashurst J.L."/>
            <person name="Taylor A."/>
            <person name="Battles J."/>
            <person name="Bird C.P."/>
            <person name="Ainscough R."/>
            <person name="Almeida J.P."/>
            <person name="Ashwell R.I.S."/>
            <person name="Ambrose K.D."/>
            <person name="Babbage A.K."/>
            <person name="Bagguley C.L."/>
            <person name="Bailey J."/>
            <person name="Banerjee R."/>
            <person name="Bates K."/>
            <person name="Beasley H."/>
            <person name="Bray-Allen S."/>
            <person name="Brown A.J."/>
            <person name="Brown J.Y."/>
            <person name="Burford D.C."/>
            <person name="Burrill W."/>
            <person name="Burton J."/>
            <person name="Cahill P."/>
            <person name="Camire D."/>
            <person name="Carter N.P."/>
            <person name="Chapman J.C."/>
            <person name="Clark S.Y."/>
            <person name="Clarke G."/>
            <person name="Clee C.M."/>
            <person name="Clegg S."/>
            <person name="Corby N."/>
            <person name="Coulson A."/>
            <person name="Dhami P."/>
            <person name="Dutta I."/>
            <person name="Dunn M."/>
            <person name="Faulkner L."/>
            <person name="Frankish A."/>
            <person name="Frankland J.A."/>
            <person name="Garner P."/>
            <person name="Garnett J."/>
            <person name="Gribble S."/>
            <person name="Griffiths C."/>
            <person name="Grocock R."/>
            <person name="Gustafson E."/>
            <person name="Hammond S."/>
            <person name="Harley J.L."/>
            <person name="Hart E."/>
            <person name="Heath P.D."/>
            <person name="Ho T.P."/>
            <person name="Hopkins B."/>
            <person name="Horne J."/>
            <person name="Howden P.J."/>
            <person name="Huckle E."/>
            <person name="Hynds C."/>
            <person name="Johnson C."/>
            <person name="Johnson D."/>
            <person name="Kana A."/>
            <person name="Kay M."/>
            <person name="Kimberley A.M."/>
            <person name="Kershaw J.K."/>
            <person name="Kokkinaki M."/>
            <person name="Laird G.K."/>
            <person name="Lawlor S."/>
            <person name="Lee H.M."/>
            <person name="Leongamornlert D.A."/>
            <person name="Laird G."/>
            <person name="Lloyd C."/>
            <person name="Lloyd D.M."/>
            <person name="Loveland J."/>
            <person name="Lovell J."/>
            <person name="McLaren S."/>
            <person name="McLay K.E."/>
            <person name="McMurray A."/>
            <person name="Mashreghi-Mohammadi M."/>
            <person name="Matthews L."/>
            <person name="Milne S."/>
            <person name="Nickerson T."/>
            <person name="Nguyen M."/>
            <person name="Overton-Larty E."/>
            <person name="Palmer S.A."/>
            <person name="Pearce A.V."/>
            <person name="Peck A.I."/>
            <person name="Pelan S."/>
            <person name="Phillimore B."/>
            <person name="Porter K."/>
            <person name="Rice C.M."/>
            <person name="Rogosin A."/>
            <person name="Ross M.T."/>
            <person name="Sarafidou T."/>
            <person name="Sehra H.K."/>
            <person name="Shownkeen R."/>
            <person name="Skuce C.D."/>
            <person name="Smith M."/>
            <person name="Standring L."/>
            <person name="Sycamore N."/>
            <person name="Tester J."/>
            <person name="Thorpe A."/>
            <person name="Torcasso W."/>
            <person name="Tracey A."/>
            <person name="Tromans A."/>
            <person name="Tsolas J."/>
            <person name="Wall M."/>
            <person name="Walsh J."/>
            <person name="Wang H."/>
            <person name="Weinstock K."/>
            <person name="West A.P."/>
            <person name="Willey D.L."/>
            <person name="Whitehead S.L."/>
            <person name="Wilming L."/>
            <person name="Wray P.W."/>
            <person name="Young L."/>
            <person name="Chen Y."/>
            <person name="Lovering R.C."/>
            <person name="Moschonas N.K."/>
            <person name="Siebert R."/>
            <person name="Fechtel K."/>
            <person name="Bentley D."/>
            <person name="Durbin R.M."/>
            <person name="Hubbard T."/>
            <person name="Doucette-Stamm L."/>
            <person name="Beck S."/>
            <person name="Smith D.R."/>
            <person name="Rogers J."/>
        </authorList>
    </citation>
    <scope>NUCLEOTIDE SEQUENCE [LARGE SCALE GENOMIC DNA]</scope>
</reference>
<reference key="4">
    <citation type="journal article" date="2004" name="Genome Res.">
        <title>The status, quality, and expansion of the NIH full-length cDNA project: the Mammalian Gene Collection (MGC).</title>
        <authorList>
            <consortium name="The MGC Project Team"/>
        </authorList>
    </citation>
    <scope>NUCLEOTIDE SEQUENCE [LARGE SCALE MRNA] (ISOFORM 1)</scope>
    <source>
        <tissue>Testis</tissue>
    </source>
</reference>
<reference key="5">
    <citation type="journal article" date="2013" name="J. Proteome Res.">
        <title>Toward a comprehensive characterization of a human cancer cell phosphoproteome.</title>
        <authorList>
            <person name="Zhou H."/>
            <person name="Di Palma S."/>
            <person name="Preisinger C."/>
            <person name="Peng M."/>
            <person name="Polat A.N."/>
            <person name="Heck A.J."/>
            <person name="Mohammed S."/>
        </authorList>
    </citation>
    <scope>PHOSPHORYLATION [LARGE SCALE ANALYSIS] AT SER-175</scope>
    <scope>IDENTIFICATION BY MASS SPECTROMETRY [LARGE SCALE ANALYSIS]</scope>
    <source>
        <tissue>Erythroleukemia</tissue>
    </source>
</reference>
<keyword id="KW-0025">Alternative splicing</keyword>
<keyword id="KW-0433">Leucine-rich repeat</keyword>
<keyword id="KW-0597">Phosphoprotein</keyword>
<keyword id="KW-1267">Proteomics identification</keyword>
<keyword id="KW-1185">Reference proteome</keyword>
<keyword id="KW-0677">Repeat</keyword>
<dbReference type="EMBL" id="AY358318">
    <property type="protein sequence ID" value="AAQ88684.1"/>
    <property type="molecule type" value="mRNA"/>
</dbReference>
<dbReference type="EMBL" id="AK001613">
    <property type="protein sequence ID" value="BAA91789.1"/>
    <property type="molecule type" value="mRNA"/>
</dbReference>
<dbReference type="EMBL" id="AK001706">
    <property type="protein sequence ID" value="BAA91849.1"/>
    <property type="status" value="ALT_SEQ"/>
    <property type="molecule type" value="mRNA"/>
</dbReference>
<dbReference type="EMBL" id="AK094734">
    <property type="protein sequence ID" value="BAC04409.1"/>
    <property type="molecule type" value="mRNA"/>
</dbReference>
<dbReference type="EMBL" id="AC022532">
    <property type="status" value="NOT_ANNOTATED_CDS"/>
    <property type="molecule type" value="Genomic_DNA"/>
</dbReference>
<dbReference type="EMBL" id="AL355138">
    <property type="status" value="NOT_ANNOTATED_CDS"/>
    <property type="molecule type" value="Genomic_DNA"/>
</dbReference>
<dbReference type="EMBL" id="BC024001">
    <property type="protein sequence ID" value="AAH24001.1"/>
    <property type="molecule type" value="mRNA"/>
</dbReference>
<dbReference type="CCDS" id="CCDS7300.1">
    <molecule id="Q8TCA0-3"/>
</dbReference>
<dbReference type="CCDS" id="CCDS7301.1">
    <molecule id="Q8TCA0-2"/>
</dbReference>
<dbReference type="CCDS" id="CCDS7302.1">
    <molecule id="Q8TCA0-1"/>
</dbReference>
<dbReference type="RefSeq" id="NP_001265140.1">
    <molecule id="Q8TCA0-1"/>
    <property type="nucleotide sequence ID" value="NM_001278211.2"/>
</dbReference>
<dbReference type="RefSeq" id="NP_001265141.1">
    <molecule id="Q8TCA0-1"/>
    <property type="nucleotide sequence ID" value="NM_001278212.2"/>
</dbReference>
<dbReference type="RefSeq" id="NP_001265142.1">
    <molecule id="Q8TCA0-2"/>
    <property type="nucleotide sequence ID" value="NM_001278213.2"/>
</dbReference>
<dbReference type="RefSeq" id="NP_001265143.1">
    <property type="nucleotide sequence ID" value="NM_001278214.1"/>
</dbReference>
<dbReference type="RefSeq" id="NP_060675.1">
    <molecule id="Q8TCA0-3"/>
    <property type="nucleotide sequence ID" value="NM_018205.4"/>
</dbReference>
<dbReference type="RefSeq" id="NP_060709.2">
    <molecule id="Q8TCA0-2"/>
    <property type="nucleotide sequence ID" value="NM_018239.3"/>
</dbReference>
<dbReference type="RefSeq" id="NP_997002.1">
    <molecule id="Q8TCA0-1"/>
    <property type="nucleotide sequence ID" value="NM_207119.3"/>
</dbReference>
<dbReference type="RefSeq" id="XP_016871863.1">
    <molecule id="Q8TCA0-1"/>
    <property type="nucleotide sequence ID" value="XM_017016374.2"/>
</dbReference>
<dbReference type="RefSeq" id="XP_016871864.1">
    <molecule id="Q8TCA0-1"/>
    <property type="nucleotide sequence ID" value="XM_017016375.2"/>
</dbReference>
<dbReference type="RefSeq" id="XP_047281373.1">
    <molecule id="Q8TCA0-2"/>
    <property type="nucleotide sequence ID" value="XM_047425417.1"/>
</dbReference>
<dbReference type="RefSeq" id="XP_047281374.1">
    <molecule id="Q8TCA0-2"/>
    <property type="nucleotide sequence ID" value="XM_047425418.1"/>
</dbReference>
<dbReference type="RefSeq" id="XP_047281375.1">
    <molecule id="Q8TCA0-3"/>
    <property type="nucleotide sequence ID" value="XM_047425419.1"/>
</dbReference>
<dbReference type="RefSeq" id="XP_047281376.1">
    <molecule id="Q8TCA0-3"/>
    <property type="nucleotide sequence ID" value="XM_047425420.1"/>
</dbReference>
<dbReference type="RefSeq" id="XP_047281377.1">
    <molecule id="Q8TCA0-3"/>
    <property type="nucleotide sequence ID" value="XM_047425421.1"/>
</dbReference>
<dbReference type="RefSeq" id="XP_054222173.1">
    <molecule id="Q8TCA0-1"/>
    <property type="nucleotide sequence ID" value="XM_054366198.1"/>
</dbReference>
<dbReference type="RefSeq" id="XP_054222174.1">
    <molecule id="Q8TCA0-1"/>
    <property type="nucleotide sequence ID" value="XM_054366199.1"/>
</dbReference>
<dbReference type="RefSeq" id="XP_054222175.1">
    <molecule id="Q8TCA0-2"/>
    <property type="nucleotide sequence ID" value="XM_054366200.1"/>
</dbReference>
<dbReference type="RefSeq" id="XP_054222176.1">
    <molecule id="Q8TCA0-2"/>
    <property type="nucleotide sequence ID" value="XM_054366201.1"/>
</dbReference>
<dbReference type="RefSeq" id="XP_054222177.1">
    <molecule id="Q8TCA0-3"/>
    <property type="nucleotide sequence ID" value="XM_054366202.1"/>
</dbReference>
<dbReference type="RefSeq" id="XP_054222178.1">
    <molecule id="Q8TCA0-3"/>
    <property type="nucleotide sequence ID" value="XM_054366203.1"/>
</dbReference>
<dbReference type="RefSeq" id="XP_054222179.1">
    <molecule id="Q8TCA0-3"/>
    <property type="nucleotide sequence ID" value="XM_054366204.1"/>
</dbReference>
<dbReference type="SMR" id="Q8TCA0"/>
<dbReference type="BioGRID" id="120517">
    <property type="interactions" value="17"/>
</dbReference>
<dbReference type="FunCoup" id="Q8TCA0">
    <property type="interactions" value="129"/>
</dbReference>
<dbReference type="IntAct" id="Q8TCA0">
    <property type="interactions" value="11"/>
</dbReference>
<dbReference type="STRING" id="9606.ENSP00000348043"/>
<dbReference type="iPTMnet" id="Q8TCA0"/>
<dbReference type="PhosphoSitePlus" id="Q8TCA0"/>
<dbReference type="BioMuta" id="LRRC20"/>
<dbReference type="DMDM" id="74762612"/>
<dbReference type="jPOST" id="Q8TCA0"/>
<dbReference type="MassIVE" id="Q8TCA0"/>
<dbReference type="PaxDb" id="9606-ENSP00000348043"/>
<dbReference type="PeptideAtlas" id="Q8TCA0"/>
<dbReference type="ProteomicsDB" id="74105">
    <molecule id="Q8TCA0-1"/>
</dbReference>
<dbReference type="ProteomicsDB" id="74106">
    <molecule id="Q8TCA0-2"/>
</dbReference>
<dbReference type="ProteomicsDB" id="74107">
    <molecule id="Q8TCA0-3"/>
</dbReference>
<dbReference type="Pumba" id="Q8TCA0"/>
<dbReference type="Antibodypedia" id="29015">
    <property type="antibodies" value="64 antibodies from 18 providers"/>
</dbReference>
<dbReference type="DNASU" id="55222"/>
<dbReference type="Ensembl" id="ENST00000355790.8">
    <molecule id="Q8TCA0-1"/>
    <property type="protein sequence ID" value="ENSP00000348043.4"/>
    <property type="gene ID" value="ENSG00000172731.15"/>
</dbReference>
<dbReference type="Ensembl" id="ENST00000357631.6">
    <molecule id="Q8TCA0-3"/>
    <property type="protein sequence ID" value="ENSP00000350255.2"/>
    <property type="gene ID" value="ENSG00000172731.15"/>
</dbReference>
<dbReference type="Ensembl" id="ENST00000358141.6">
    <molecule id="Q8TCA0-2"/>
    <property type="protein sequence ID" value="ENSP00000350860.2"/>
    <property type="gene ID" value="ENSG00000172731.15"/>
</dbReference>
<dbReference type="Ensembl" id="ENST00000373224.5">
    <molecule id="Q8TCA0-1"/>
    <property type="protein sequence ID" value="ENSP00000362321.1"/>
    <property type="gene ID" value="ENSG00000172731.15"/>
</dbReference>
<dbReference type="Ensembl" id="ENST00000395011.5">
    <molecule id="Q8TCA0-2"/>
    <property type="protein sequence ID" value="ENSP00000378458.1"/>
    <property type="gene ID" value="ENSG00000172731.15"/>
</dbReference>
<dbReference type="Ensembl" id="ENST00000446961.4">
    <molecule id="Q8TCA0-1"/>
    <property type="protein sequence ID" value="ENSP00000413745.2"/>
    <property type="gene ID" value="ENSG00000172731.15"/>
</dbReference>
<dbReference type="GeneID" id="55222"/>
<dbReference type="KEGG" id="hsa:55222"/>
<dbReference type="MANE-Select" id="ENST00000446961.4">
    <property type="protein sequence ID" value="ENSP00000413745.2"/>
    <property type="RefSeq nucleotide sequence ID" value="NM_001278212.2"/>
    <property type="RefSeq protein sequence ID" value="NP_001265141.1"/>
</dbReference>
<dbReference type="UCSC" id="uc001jqx.3">
    <molecule id="Q8TCA0-1"/>
    <property type="organism name" value="human"/>
</dbReference>
<dbReference type="AGR" id="HGNC:23421"/>
<dbReference type="CTD" id="55222"/>
<dbReference type="DisGeNET" id="55222"/>
<dbReference type="GeneCards" id="LRRC20"/>
<dbReference type="HGNC" id="HGNC:23421">
    <property type="gene designation" value="LRRC20"/>
</dbReference>
<dbReference type="HPA" id="ENSG00000172731">
    <property type="expression patterns" value="Group enriched (skeletal muscle, tongue)"/>
</dbReference>
<dbReference type="neXtProt" id="NX_Q8TCA0"/>
<dbReference type="OpenTargets" id="ENSG00000172731"/>
<dbReference type="PharmGKB" id="PA134935389"/>
<dbReference type="VEuPathDB" id="HostDB:ENSG00000172731"/>
<dbReference type="eggNOG" id="KOG4579">
    <property type="taxonomic scope" value="Eukaryota"/>
</dbReference>
<dbReference type="GeneTree" id="ENSGT00730000111199"/>
<dbReference type="HOGENOM" id="CLU_070683_2_1_1"/>
<dbReference type="InParanoid" id="Q8TCA0"/>
<dbReference type="OMA" id="WINVKSN"/>
<dbReference type="OrthoDB" id="1060944at2759"/>
<dbReference type="PAN-GO" id="Q8TCA0">
    <property type="GO annotations" value="0 GO annotations based on evolutionary models"/>
</dbReference>
<dbReference type="PhylomeDB" id="Q8TCA0"/>
<dbReference type="TreeFam" id="TF319816"/>
<dbReference type="PathwayCommons" id="Q8TCA0"/>
<dbReference type="SignaLink" id="Q8TCA0"/>
<dbReference type="BioGRID-ORCS" id="55222">
    <property type="hits" value="12 hits in 1154 CRISPR screens"/>
</dbReference>
<dbReference type="GenomeRNAi" id="55222"/>
<dbReference type="Pharos" id="Q8TCA0">
    <property type="development level" value="Tdark"/>
</dbReference>
<dbReference type="PRO" id="PR:Q8TCA0"/>
<dbReference type="Proteomes" id="UP000005640">
    <property type="component" value="Chromosome 10"/>
</dbReference>
<dbReference type="RNAct" id="Q8TCA0">
    <property type="molecule type" value="protein"/>
</dbReference>
<dbReference type="Bgee" id="ENSG00000172731">
    <property type="expression patterns" value="Expressed in hindlimb stylopod muscle and 176 other cell types or tissues"/>
</dbReference>
<dbReference type="ExpressionAtlas" id="Q8TCA0">
    <property type="expression patterns" value="baseline and differential"/>
</dbReference>
<dbReference type="Gene3D" id="3.80.10.10">
    <property type="entry name" value="Ribonuclease Inhibitor"/>
    <property type="match status" value="1"/>
</dbReference>
<dbReference type="InterPro" id="IPR001611">
    <property type="entry name" value="Leu-rich_rpt"/>
</dbReference>
<dbReference type="InterPro" id="IPR003591">
    <property type="entry name" value="Leu-rich_rpt_typical-subtyp"/>
</dbReference>
<dbReference type="InterPro" id="IPR032675">
    <property type="entry name" value="LRR_dom_sf"/>
</dbReference>
<dbReference type="InterPro" id="IPR050216">
    <property type="entry name" value="LRR_domain-containing"/>
</dbReference>
<dbReference type="PANTHER" id="PTHR48051">
    <property type="match status" value="1"/>
</dbReference>
<dbReference type="PANTHER" id="PTHR48051:SF1">
    <property type="entry name" value="RAS SUPPRESSOR PROTEIN 1"/>
    <property type="match status" value="1"/>
</dbReference>
<dbReference type="Pfam" id="PF13855">
    <property type="entry name" value="LRR_8"/>
    <property type="match status" value="1"/>
</dbReference>
<dbReference type="SMART" id="SM00369">
    <property type="entry name" value="LRR_TYP"/>
    <property type="match status" value="3"/>
</dbReference>
<dbReference type="SUPFAM" id="SSF52058">
    <property type="entry name" value="L domain-like"/>
    <property type="match status" value="1"/>
</dbReference>
<organism>
    <name type="scientific">Homo sapiens</name>
    <name type="common">Human</name>
    <dbReference type="NCBI Taxonomy" id="9606"/>
    <lineage>
        <taxon>Eukaryota</taxon>
        <taxon>Metazoa</taxon>
        <taxon>Chordata</taxon>
        <taxon>Craniata</taxon>
        <taxon>Vertebrata</taxon>
        <taxon>Euteleostomi</taxon>
        <taxon>Mammalia</taxon>
        <taxon>Eutheria</taxon>
        <taxon>Euarchontoglires</taxon>
        <taxon>Primates</taxon>
        <taxon>Haplorrhini</taxon>
        <taxon>Catarrhini</taxon>
        <taxon>Hominidae</taxon>
        <taxon>Homo</taxon>
    </lineage>
</organism>